<proteinExistence type="inferred from homology"/>
<accession>Q5QVA8</accession>
<gene>
    <name evidence="1" type="primary">gcvT</name>
    <name type="ordered locus">IL2094</name>
</gene>
<sequence length="359" mass="39369">MGSRTPLYEAHVKAGAKMVDFHGWDMPLNYGSQIEEHHAVRRDCGVFDVSHMTIVDVEGSQAQAFLRYLLANDVAKLKTEGKAQYTSMLNENGGVIDDLIVYFFSENAYRMVVNSATRDRDLAWIEKVAADFDVTTKERDDMGMLALQGPKAADKIQGVLTAEQYAEIDGMKPFVGKDVGDYFIATTGYTGEKGYEIVVPAEQLEALWNDLLKADVAPCGLGARDTLRLEAGMNLYGQDMDENITPLEANMGWSVAFEPADRDFIGRKALEQKKAEGHDKLVGLVMEEKGVLRHGQKVTVEGGEGIITSGTFSPTLGFSVAMARVPSSVGDTAEVEMRKKQMPVKVVKPGFVRNGQSVL</sequence>
<name>GCST_IDILO</name>
<feature type="chain" id="PRO_0000122561" description="Aminomethyltransferase">
    <location>
        <begin position="1"/>
        <end position="359"/>
    </location>
</feature>
<dbReference type="EC" id="2.1.2.10" evidence="1"/>
<dbReference type="EMBL" id="AE017340">
    <property type="protein sequence ID" value="AAV82926.1"/>
    <property type="molecule type" value="Genomic_DNA"/>
</dbReference>
<dbReference type="RefSeq" id="WP_011235322.1">
    <property type="nucleotide sequence ID" value="NC_006512.1"/>
</dbReference>
<dbReference type="SMR" id="Q5QVA8"/>
<dbReference type="STRING" id="283942.IL2094"/>
<dbReference type="GeneID" id="41337283"/>
<dbReference type="KEGG" id="ilo:IL2094"/>
<dbReference type="eggNOG" id="COG0404">
    <property type="taxonomic scope" value="Bacteria"/>
</dbReference>
<dbReference type="HOGENOM" id="CLU_007884_10_2_6"/>
<dbReference type="OrthoDB" id="9774591at2"/>
<dbReference type="Proteomes" id="UP000001171">
    <property type="component" value="Chromosome"/>
</dbReference>
<dbReference type="GO" id="GO:0005829">
    <property type="term" value="C:cytosol"/>
    <property type="evidence" value="ECO:0007669"/>
    <property type="project" value="TreeGrafter"/>
</dbReference>
<dbReference type="GO" id="GO:0005960">
    <property type="term" value="C:glycine cleavage complex"/>
    <property type="evidence" value="ECO:0007669"/>
    <property type="project" value="InterPro"/>
</dbReference>
<dbReference type="GO" id="GO:0004047">
    <property type="term" value="F:aminomethyltransferase activity"/>
    <property type="evidence" value="ECO:0007669"/>
    <property type="project" value="UniProtKB-UniRule"/>
</dbReference>
<dbReference type="GO" id="GO:0008483">
    <property type="term" value="F:transaminase activity"/>
    <property type="evidence" value="ECO:0007669"/>
    <property type="project" value="UniProtKB-KW"/>
</dbReference>
<dbReference type="GO" id="GO:0019464">
    <property type="term" value="P:glycine decarboxylation via glycine cleavage system"/>
    <property type="evidence" value="ECO:0007669"/>
    <property type="project" value="UniProtKB-UniRule"/>
</dbReference>
<dbReference type="FunFam" id="2.40.30.110:FF:000001">
    <property type="entry name" value="Aminomethyltransferase"/>
    <property type="match status" value="1"/>
</dbReference>
<dbReference type="FunFam" id="3.30.70.1400:FF:000001">
    <property type="entry name" value="Aminomethyltransferase"/>
    <property type="match status" value="1"/>
</dbReference>
<dbReference type="FunFam" id="4.10.1250.10:FF:000001">
    <property type="entry name" value="Aminomethyltransferase"/>
    <property type="match status" value="1"/>
</dbReference>
<dbReference type="Gene3D" id="2.40.30.110">
    <property type="entry name" value="Aminomethyltransferase beta-barrel domains"/>
    <property type="match status" value="1"/>
</dbReference>
<dbReference type="Gene3D" id="3.30.70.1400">
    <property type="entry name" value="Aminomethyltransferase beta-barrel domains"/>
    <property type="match status" value="1"/>
</dbReference>
<dbReference type="Gene3D" id="4.10.1250.10">
    <property type="entry name" value="Aminomethyltransferase fragment"/>
    <property type="match status" value="1"/>
</dbReference>
<dbReference type="Gene3D" id="3.30.1360.120">
    <property type="entry name" value="Probable tRNA modification gtpase trme, domain 1"/>
    <property type="match status" value="1"/>
</dbReference>
<dbReference type="HAMAP" id="MF_00259">
    <property type="entry name" value="GcvT"/>
    <property type="match status" value="1"/>
</dbReference>
<dbReference type="InterPro" id="IPR006223">
    <property type="entry name" value="GCS_T"/>
</dbReference>
<dbReference type="InterPro" id="IPR022903">
    <property type="entry name" value="GCS_T_bac"/>
</dbReference>
<dbReference type="InterPro" id="IPR013977">
    <property type="entry name" value="GCST_C"/>
</dbReference>
<dbReference type="InterPro" id="IPR006222">
    <property type="entry name" value="GCV_T_N"/>
</dbReference>
<dbReference type="InterPro" id="IPR028896">
    <property type="entry name" value="GcvT/YgfZ/DmdA"/>
</dbReference>
<dbReference type="InterPro" id="IPR029043">
    <property type="entry name" value="GcvT/YgfZ_C"/>
</dbReference>
<dbReference type="InterPro" id="IPR027266">
    <property type="entry name" value="TrmE/GcvT_dom1"/>
</dbReference>
<dbReference type="NCBIfam" id="TIGR00528">
    <property type="entry name" value="gcvT"/>
    <property type="match status" value="1"/>
</dbReference>
<dbReference type="NCBIfam" id="NF001567">
    <property type="entry name" value="PRK00389.1"/>
    <property type="match status" value="1"/>
</dbReference>
<dbReference type="PANTHER" id="PTHR43757">
    <property type="entry name" value="AMINOMETHYLTRANSFERASE"/>
    <property type="match status" value="1"/>
</dbReference>
<dbReference type="PANTHER" id="PTHR43757:SF2">
    <property type="entry name" value="AMINOMETHYLTRANSFERASE, MITOCHONDRIAL"/>
    <property type="match status" value="1"/>
</dbReference>
<dbReference type="Pfam" id="PF01571">
    <property type="entry name" value="GCV_T"/>
    <property type="match status" value="1"/>
</dbReference>
<dbReference type="Pfam" id="PF08669">
    <property type="entry name" value="GCV_T_C"/>
    <property type="match status" value="1"/>
</dbReference>
<dbReference type="PIRSF" id="PIRSF006487">
    <property type="entry name" value="GcvT"/>
    <property type="match status" value="1"/>
</dbReference>
<dbReference type="SUPFAM" id="SSF101790">
    <property type="entry name" value="Aminomethyltransferase beta-barrel domain"/>
    <property type="match status" value="1"/>
</dbReference>
<dbReference type="SUPFAM" id="SSF103025">
    <property type="entry name" value="Folate-binding domain"/>
    <property type="match status" value="1"/>
</dbReference>
<reference key="1">
    <citation type="journal article" date="2004" name="Proc. Natl. Acad. Sci. U.S.A.">
        <title>Genome sequence of the deep-sea gamma-proteobacterium Idiomarina loihiensis reveals amino acid fermentation as a source of carbon and energy.</title>
        <authorList>
            <person name="Hou S."/>
            <person name="Saw J.H."/>
            <person name="Lee K.S."/>
            <person name="Freitas T.A."/>
            <person name="Belisle C."/>
            <person name="Kawarabayasi Y."/>
            <person name="Donachie S.P."/>
            <person name="Pikina A."/>
            <person name="Galperin M.Y."/>
            <person name="Koonin E.V."/>
            <person name="Makarova K.S."/>
            <person name="Omelchenko M.V."/>
            <person name="Sorokin A."/>
            <person name="Wolf Y.I."/>
            <person name="Li Q.X."/>
            <person name="Keum Y.S."/>
            <person name="Campbell S."/>
            <person name="Denery J."/>
            <person name="Aizawa S."/>
            <person name="Shibata S."/>
            <person name="Malahoff A."/>
            <person name="Alam M."/>
        </authorList>
    </citation>
    <scope>NUCLEOTIDE SEQUENCE [LARGE SCALE GENOMIC DNA]</scope>
    <source>
        <strain>ATCC BAA-735 / DSM 15497 / L2-TR</strain>
    </source>
</reference>
<evidence type="ECO:0000255" key="1">
    <source>
        <dbReference type="HAMAP-Rule" id="MF_00259"/>
    </source>
</evidence>
<keyword id="KW-0032">Aminotransferase</keyword>
<keyword id="KW-1185">Reference proteome</keyword>
<keyword id="KW-0808">Transferase</keyword>
<organism>
    <name type="scientific">Idiomarina loihiensis (strain ATCC BAA-735 / DSM 15497 / L2-TR)</name>
    <dbReference type="NCBI Taxonomy" id="283942"/>
    <lineage>
        <taxon>Bacteria</taxon>
        <taxon>Pseudomonadati</taxon>
        <taxon>Pseudomonadota</taxon>
        <taxon>Gammaproteobacteria</taxon>
        <taxon>Alteromonadales</taxon>
        <taxon>Idiomarinaceae</taxon>
        <taxon>Idiomarina</taxon>
    </lineage>
</organism>
<protein>
    <recommendedName>
        <fullName evidence="1">Aminomethyltransferase</fullName>
        <ecNumber evidence="1">2.1.2.10</ecNumber>
    </recommendedName>
    <alternativeName>
        <fullName evidence="1">Glycine cleavage system T protein</fullName>
    </alternativeName>
</protein>
<comment type="function">
    <text evidence="1">The glycine cleavage system catalyzes the degradation of glycine.</text>
</comment>
<comment type="catalytic activity">
    <reaction evidence="1">
        <text>N(6)-[(R)-S(8)-aminomethyldihydrolipoyl]-L-lysyl-[protein] + (6S)-5,6,7,8-tetrahydrofolate = N(6)-[(R)-dihydrolipoyl]-L-lysyl-[protein] + (6R)-5,10-methylene-5,6,7,8-tetrahydrofolate + NH4(+)</text>
        <dbReference type="Rhea" id="RHEA:16945"/>
        <dbReference type="Rhea" id="RHEA-COMP:10475"/>
        <dbReference type="Rhea" id="RHEA-COMP:10492"/>
        <dbReference type="ChEBI" id="CHEBI:15636"/>
        <dbReference type="ChEBI" id="CHEBI:28938"/>
        <dbReference type="ChEBI" id="CHEBI:57453"/>
        <dbReference type="ChEBI" id="CHEBI:83100"/>
        <dbReference type="ChEBI" id="CHEBI:83143"/>
        <dbReference type="EC" id="2.1.2.10"/>
    </reaction>
</comment>
<comment type="subunit">
    <text evidence="1">The glycine cleavage system is composed of four proteins: P, T, L and H.</text>
</comment>
<comment type="similarity">
    <text evidence="1">Belongs to the GcvT family.</text>
</comment>